<evidence type="ECO:0000255" key="1"/>
<evidence type="ECO:0000305" key="2"/>
<protein>
    <recommendedName>
        <fullName>Seripauperin-19</fullName>
    </recommendedName>
</protein>
<accession>P0CE85</accession>
<accession>D6W0F1</accession>
<accession>P42221</accession>
<accession>Q92395</accession>
<organism>
    <name type="scientific">Saccharomyces cerevisiae (strain ATCC 204508 / S288c)</name>
    <name type="common">Baker's yeast</name>
    <dbReference type="NCBI Taxonomy" id="559292"/>
    <lineage>
        <taxon>Eukaryota</taxon>
        <taxon>Fungi</taxon>
        <taxon>Dikarya</taxon>
        <taxon>Ascomycota</taxon>
        <taxon>Saccharomycotina</taxon>
        <taxon>Saccharomycetes</taxon>
        <taxon>Saccharomycetales</taxon>
        <taxon>Saccharomycetaceae</taxon>
        <taxon>Saccharomyces</taxon>
    </lineage>
</organism>
<sequence length="124" mass="13173">MVKLTSIAAGVAAIAAGVAAAPATTTLSPSDERVNLVELGVYVSDIRAHLAQYYLFQAAHPTETYPVEIAEAVFNYGDFTTMLTGIPAEQVTRVITGVPWYSTRLRPAISSALSKDGIYTAIPK</sequence>
<keyword id="KW-1185">Reference proteome</keyword>
<keyword id="KW-0732">Signal</keyword>
<proteinExistence type="inferred from homology"/>
<comment type="similarity">
    <text evidence="2">Belongs to the SRP1/TIP1 family. Seripauperin subfamily.</text>
</comment>
<name>PAU19_YEAST</name>
<dbReference type="EMBL" id="Z54141">
    <property type="protein sequence ID" value="CAA90843.1"/>
    <property type="molecule type" value="Genomic_DNA"/>
</dbReference>
<dbReference type="EMBL" id="AY557962">
    <property type="protein sequence ID" value="AAS56288.1"/>
    <property type="molecule type" value="Genomic_DNA"/>
</dbReference>
<dbReference type="EMBL" id="BK006946">
    <property type="protein sequence ID" value="DAA10225.1"/>
    <property type="molecule type" value="Genomic_DNA"/>
</dbReference>
<dbReference type="PIR" id="S67307">
    <property type="entry name" value="S67307"/>
</dbReference>
<dbReference type="RefSeq" id="NP_014058.1">
    <property type="nucleotide sequence ID" value="NM_001182838.1"/>
</dbReference>
<dbReference type="BioGRID" id="35503">
    <property type="interactions" value="32"/>
</dbReference>
<dbReference type="FunCoup" id="P0CE85">
    <property type="interactions" value="35"/>
</dbReference>
<dbReference type="EnsemblFungi" id="YMR325W_mRNA">
    <property type="protein sequence ID" value="YMR325W"/>
    <property type="gene ID" value="YMR325W"/>
</dbReference>
<dbReference type="GeneID" id="855375"/>
<dbReference type="KEGG" id="sce:YMR325W"/>
<dbReference type="AGR" id="SGD:S000004944"/>
<dbReference type="SGD" id="S000004944">
    <property type="gene designation" value="PAU19"/>
</dbReference>
<dbReference type="VEuPathDB" id="FungiDB:YMR325W"/>
<dbReference type="eggNOG" id="ENOG502SR1B">
    <property type="taxonomic scope" value="Eukaryota"/>
</dbReference>
<dbReference type="HOGENOM" id="CLU_136376_0_0_1"/>
<dbReference type="InParanoid" id="P0CE85"/>
<dbReference type="OrthoDB" id="4053771at2759"/>
<dbReference type="BioCyc" id="YEAST:G3O-32986-MONOMER"/>
<dbReference type="PRO" id="PR:P0CE85"/>
<dbReference type="Proteomes" id="UP000002311">
    <property type="component" value="Chromosome XIII"/>
</dbReference>
<dbReference type="RNAct" id="P0CE85">
    <property type="molecule type" value="protein"/>
</dbReference>
<dbReference type="GO" id="GO:0009277">
    <property type="term" value="C:fungal-type cell wall"/>
    <property type="evidence" value="ECO:0000318"/>
    <property type="project" value="GO_Central"/>
</dbReference>
<dbReference type="GO" id="GO:0005199">
    <property type="term" value="F:structural constituent of cell wall"/>
    <property type="evidence" value="ECO:0000318"/>
    <property type="project" value="GO_Central"/>
</dbReference>
<dbReference type="GO" id="GO:0031505">
    <property type="term" value="P:fungal-type cell wall organization"/>
    <property type="evidence" value="ECO:0000318"/>
    <property type="project" value="GO_Central"/>
</dbReference>
<dbReference type="InterPro" id="IPR000992">
    <property type="entry name" value="SRP1_TIP1"/>
</dbReference>
<dbReference type="InterPro" id="IPR050788">
    <property type="entry name" value="Yeast_SRP1/TIP1_CWP"/>
</dbReference>
<dbReference type="PANTHER" id="PTHR31002:SF34">
    <property type="entry name" value="CELL WALL PROTEIN CWP1-RELATED"/>
    <property type="match status" value="1"/>
</dbReference>
<dbReference type="PANTHER" id="PTHR31002">
    <property type="entry name" value="SERIPAUPERIN"/>
    <property type="match status" value="1"/>
</dbReference>
<dbReference type="Pfam" id="PF00660">
    <property type="entry name" value="SRP1_TIP1"/>
    <property type="match status" value="1"/>
</dbReference>
<dbReference type="PROSITE" id="PS00724">
    <property type="entry name" value="SRP1_TIP1"/>
    <property type="match status" value="1"/>
</dbReference>
<reference key="1">
    <citation type="journal article" date="1997" name="Nature">
        <title>The nucleotide sequence of Saccharomyces cerevisiae chromosome XIII.</title>
        <authorList>
            <person name="Bowman S."/>
            <person name="Churcher C.M."/>
            <person name="Badcock K."/>
            <person name="Brown D."/>
            <person name="Chillingworth T."/>
            <person name="Connor R."/>
            <person name="Dedman K."/>
            <person name="Devlin K."/>
            <person name="Gentles S."/>
            <person name="Hamlin N."/>
            <person name="Hunt S."/>
            <person name="Jagels K."/>
            <person name="Lye G."/>
            <person name="Moule S."/>
            <person name="Odell C."/>
            <person name="Pearson D."/>
            <person name="Rajandream M.A."/>
            <person name="Rice P."/>
            <person name="Skelton J."/>
            <person name="Walsh S.V."/>
            <person name="Whitehead S."/>
            <person name="Barrell B.G."/>
        </authorList>
    </citation>
    <scope>NUCLEOTIDE SEQUENCE [LARGE SCALE GENOMIC DNA]</scope>
    <source>
        <strain>ATCC 204508 / S288c</strain>
    </source>
</reference>
<reference key="2">
    <citation type="journal article" date="2014" name="G3 (Bethesda)">
        <title>The reference genome sequence of Saccharomyces cerevisiae: Then and now.</title>
        <authorList>
            <person name="Engel S.R."/>
            <person name="Dietrich F.S."/>
            <person name="Fisk D.G."/>
            <person name="Binkley G."/>
            <person name="Balakrishnan R."/>
            <person name="Costanzo M.C."/>
            <person name="Dwight S.S."/>
            <person name="Hitz B.C."/>
            <person name="Karra K."/>
            <person name="Nash R.S."/>
            <person name="Weng S."/>
            <person name="Wong E.D."/>
            <person name="Lloyd P."/>
            <person name="Skrzypek M.S."/>
            <person name="Miyasato S.R."/>
            <person name="Simison M."/>
            <person name="Cherry J.M."/>
        </authorList>
    </citation>
    <scope>GENOME REANNOTATION</scope>
    <source>
        <strain>ATCC 204508 / S288c</strain>
    </source>
</reference>
<reference key="3">
    <citation type="journal article" date="2007" name="Genome Res.">
        <title>Approaching a complete repository of sequence-verified protein-encoding clones for Saccharomyces cerevisiae.</title>
        <authorList>
            <person name="Hu Y."/>
            <person name="Rolfs A."/>
            <person name="Bhullar B."/>
            <person name="Murthy T.V.S."/>
            <person name="Zhu C."/>
            <person name="Berger M.F."/>
            <person name="Camargo A.A."/>
            <person name="Kelley F."/>
            <person name="McCarron S."/>
            <person name="Jepson D."/>
            <person name="Richardson A."/>
            <person name="Raphael J."/>
            <person name="Moreira D."/>
            <person name="Taycher E."/>
            <person name="Zuo D."/>
            <person name="Mohr S."/>
            <person name="Kane M.F."/>
            <person name="Williamson J."/>
            <person name="Simpson A.J.G."/>
            <person name="Bulyk M.L."/>
            <person name="Harlow E."/>
            <person name="Marsischky G."/>
            <person name="Kolodner R.D."/>
            <person name="LaBaer J."/>
        </authorList>
    </citation>
    <scope>NUCLEOTIDE SEQUENCE [GENOMIC DNA]</scope>
</reference>
<gene>
    <name type="primary">PAU19</name>
    <name type="ordered locus">YMR325W</name>
    <name type="ORF">YM9924.17</name>
</gene>
<feature type="signal peptide" evidence="1">
    <location>
        <begin position="1"/>
        <end position="20"/>
    </location>
</feature>
<feature type="chain" id="PRO_0000033249" description="Seripauperin-19">
    <location>
        <begin position="21"/>
        <end position="124"/>
    </location>
</feature>
<feature type="sequence conflict" description="In Ref. 3; AAS56288." evidence="2" ref="3">
    <original>V</original>
    <variation>I</variation>
    <location>
        <position position="18"/>
    </location>
</feature>